<comment type="function">
    <text evidence="1 3">Component of the COP9 signalosome (CSN) complex that acts as an regulator of the ubiquitin (Ubl) conjugation pathway by mediating the deneddylation of the cullin subunit of SCF-type E3 ubiquitin-protein ligase complexes (By similarity). The CSN complex is involved in the regulation of the circadian clock through its control of the stability of the SCF(FWD-1) complex.</text>
</comment>
<comment type="subunit">
    <text evidence="3">Component of the COP9 signalosome (CSN) complex.</text>
</comment>
<comment type="subcellular location">
    <subcellularLocation>
        <location evidence="1">Cytoplasm</location>
    </subcellularLocation>
    <subcellularLocation>
        <location evidence="1">Nucleus</location>
    </subcellularLocation>
</comment>
<comment type="similarity">
    <text evidence="4">Belongs to the CSN1 family.</text>
</comment>
<comment type="sequence caution" evidence="4">
    <conflict type="erroneous gene model prediction">
        <sequence resource="EMBL-CDS" id="EAA27434"/>
    </conflict>
</comment>
<name>CSN1_NEUCR</name>
<feature type="chain" id="PRO_0000314739" description="COP9 signalosome complex subunit 1">
    <location>
        <begin position="1"/>
        <end position="425"/>
    </location>
</feature>
<feature type="domain" description="PCI" evidence="2">
    <location>
        <begin position="219"/>
        <end position="379"/>
    </location>
</feature>
<proteinExistence type="evidence at protein level"/>
<keyword id="KW-0963">Cytoplasm</keyword>
<keyword id="KW-0539">Nucleus</keyword>
<keyword id="KW-1185">Reference proteome</keyword>
<keyword id="KW-0736">Signalosome</keyword>
<evidence type="ECO:0000250" key="1"/>
<evidence type="ECO:0000255" key="2">
    <source>
        <dbReference type="PROSITE-ProRule" id="PRU01185"/>
    </source>
</evidence>
<evidence type="ECO:0000269" key="3">
    <source>
    </source>
</evidence>
<evidence type="ECO:0000305" key="4"/>
<accession>Q7RXQ1</accession>
<protein>
    <recommendedName>
        <fullName>COP9 signalosome complex subunit 1</fullName>
        <shortName>CSN complex subunit 1</shortName>
    </recommendedName>
</protein>
<gene>
    <name type="primary">csn-1</name>
    <name type="ORF">NCU00157</name>
</gene>
<sequence>MDDRKLAFFTAIEDQGGVIVKGRTRFERLFHIGRSSVPLCVDALKAAVQEAKAGSDILRYQMAVNSLFQAAPNEPEALLDKAWMESKEKENRDTTAHLQAELQGYKNNLIKESIRMGNEDLGKHFEAIGDVEAAMDSFWKMRTEVSSTEQLVDLGKLLVRVAIERRDWKSIGNHLKPLNSVNDSDPKAKALKTYSKIANGIAALGQERYKEAAFCFVEASSGVPPEIYNQIASPNDVAIYGGLLALATMDRHELQANLLDNDSFREFLQREPHIRRAITQFVNGRYAACIEILESYRPDYLLDIYLQKHVPKLYADIRTKSIVQYLKPFSCVRLDTMQKAFNGPGPSIEDELFTMIKDGKLNARIDAINKSKALQTLENYEKQALDRIRRMNIMAADLEVKGSRKPGGMNDIPFSMTTDDTVSLA</sequence>
<reference key="1">
    <citation type="journal article" date="2005" name="Genes Dev.">
        <title>The COP9 signalosome regulates the Neurospora circadian clock by controlling the stability of the SCFFWD-1 complex.</title>
        <authorList>
            <person name="He Q."/>
            <person name="Cheng P."/>
            <person name="He Q."/>
            <person name="Liu Y."/>
        </authorList>
    </citation>
    <scope>NUCLEOTIDE SEQUENCE [MRNA]</scope>
    <scope>IDENTIFICATION BY MASS SPECTROMETRY</scope>
    <scope>IDENTIFICATION IN THE COP9 SIGNALOSOME COMPLEX</scope>
    <scope>FUNCTION OF THE COP9 SIGNALOSOME COMPLEX</scope>
</reference>
<reference key="2">
    <citation type="journal article" date="2003" name="Nature">
        <title>The genome sequence of the filamentous fungus Neurospora crassa.</title>
        <authorList>
            <person name="Galagan J.E."/>
            <person name="Calvo S.E."/>
            <person name="Borkovich K.A."/>
            <person name="Selker E.U."/>
            <person name="Read N.D."/>
            <person name="Jaffe D.B."/>
            <person name="FitzHugh W."/>
            <person name="Ma L.-J."/>
            <person name="Smirnov S."/>
            <person name="Purcell S."/>
            <person name="Rehman B."/>
            <person name="Elkins T."/>
            <person name="Engels R."/>
            <person name="Wang S."/>
            <person name="Nielsen C.B."/>
            <person name="Butler J."/>
            <person name="Endrizzi M."/>
            <person name="Qui D."/>
            <person name="Ianakiev P."/>
            <person name="Bell-Pedersen D."/>
            <person name="Nelson M.A."/>
            <person name="Werner-Washburne M."/>
            <person name="Selitrennikoff C.P."/>
            <person name="Kinsey J.A."/>
            <person name="Braun E.L."/>
            <person name="Zelter A."/>
            <person name="Schulte U."/>
            <person name="Kothe G.O."/>
            <person name="Jedd G."/>
            <person name="Mewes H.-W."/>
            <person name="Staben C."/>
            <person name="Marcotte E."/>
            <person name="Greenberg D."/>
            <person name="Roy A."/>
            <person name="Foley K."/>
            <person name="Naylor J."/>
            <person name="Stange-Thomann N."/>
            <person name="Barrett R."/>
            <person name="Gnerre S."/>
            <person name="Kamal M."/>
            <person name="Kamvysselis M."/>
            <person name="Mauceli E.W."/>
            <person name="Bielke C."/>
            <person name="Rudd S."/>
            <person name="Frishman D."/>
            <person name="Krystofova S."/>
            <person name="Rasmussen C."/>
            <person name="Metzenberg R.L."/>
            <person name="Perkins D.D."/>
            <person name="Kroken S."/>
            <person name="Cogoni C."/>
            <person name="Macino G."/>
            <person name="Catcheside D.E.A."/>
            <person name="Li W."/>
            <person name="Pratt R.J."/>
            <person name="Osmani S.A."/>
            <person name="DeSouza C.P.C."/>
            <person name="Glass N.L."/>
            <person name="Orbach M.J."/>
            <person name="Berglund J.A."/>
            <person name="Voelker R."/>
            <person name="Yarden O."/>
            <person name="Plamann M."/>
            <person name="Seiler S."/>
            <person name="Dunlap J.C."/>
            <person name="Radford A."/>
            <person name="Aramayo R."/>
            <person name="Natvig D.O."/>
            <person name="Alex L.A."/>
            <person name="Mannhaupt G."/>
            <person name="Ebbole D.J."/>
            <person name="Freitag M."/>
            <person name="Paulsen I."/>
            <person name="Sachs M.S."/>
            <person name="Lander E.S."/>
            <person name="Nusbaum C."/>
            <person name="Birren B.W."/>
        </authorList>
    </citation>
    <scope>NUCLEOTIDE SEQUENCE [LARGE SCALE GENOMIC DNA]</scope>
    <source>
        <strain>ATCC 24698 / 74-OR23-1A / CBS 708.71 / DSM 1257 / FGSC 987</strain>
    </source>
</reference>
<dbReference type="EMBL" id="DQ242510">
    <property type="protein sequence ID" value="ABB36580.1"/>
    <property type="molecule type" value="mRNA"/>
</dbReference>
<dbReference type="EMBL" id="CM002238">
    <property type="protein sequence ID" value="EAA27434.2"/>
    <property type="status" value="ALT_SEQ"/>
    <property type="molecule type" value="Genomic_DNA"/>
</dbReference>
<dbReference type="RefSeq" id="XP_956670.2">
    <property type="nucleotide sequence ID" value="XM_951577.2"/>
</dbReference>
<dbReference type="SMR" id="Q7RXQ1"/>
<dbReference type="STRING" id="367110.Q7RXQ1"/>
<dbReference type="PaxDb" id="5141-EFNCRP00000000264"/>
<dbReference type="EnsemblFungi" id="EAA27434">
    <property type="protein sequence ID" value="EAA27434"/>
    <property type="gene ID" value="NCU00157"/>
</dbReference>
<dbReference type="GeneID" id="3872817"/>
<dbReference type="KEGG" id="ncr:NCU00157"/>
<dbReference type="HOGENOM" id="CLU_022348_1_1_1"/>
<dbReference type="InParanoid" id="Q7RXQ1"/>
<dbReference type="OrthoDB" id="422427at2759"/>
<dbReference type="Proteomes" id="UP000001805">
    <property type="component" value="Chromosome 3, Linkage Group III"/>
</dbReference>
<dbReference type="GO" id="GO:0008180">
    <property type="term" value="C:COP9 signalosome"/>
    <property type="evidence" value="ECO:0000318"/>
    <property type="project" value="GO_Central"/>
</dbReference>
<dbReference type="GO" id="GO:0005737">
    <property type="term" value="C:cytoplasm"/>
    <property type="evidence" value="ECO:0007669"/>
    <property type="project" value="UniProtKB-SubCell"/>
</dbReference>
<dbReference type="FunFam" id="1.25.40.570:FF:000022">
    <property type="entry name" value="COP9 signalosome complex subunit 1"/>
    <property type="match status" value="1"/>
</dbReference>
<dbReference type="Gene3D" id="1.25.40.570">
    <property type="match status" value="1"/>
</dbReference>
<dbReference type="InterPro" id="IPR000717">
    <property type="entry name" value="PCI_dom"/>
</dbReference>
<dbReference type="InterPro" id="IPR019585">
    <property type="entry name" value="Rpn7/CSN1"/>
</dbReference>
<dbReference type="InterPro" id="IPR045135">
    <property type="entry name" value="Rpn7_N"/>
</dbReference>
<dbReference type="InterPro" id="IPR036390">
    <property type="entry name" value="WH_DNA-bd_sf"/>
</dbReference>
<dbReference type="PANTHER" id="PTHR14145">
    <property type="entry name" value="26S PROTESOME SUBUNIT 6"/>
    <property type="match status" value="1"/>
</dbReference>
<dbReference type="PANTHER" id="PTHR14145:SF2">
    <property type="entry name" value="COP9 SIGNALOSOME COMPLEX SUBUNIT 1"/>
    <property type="match status" value="1"/>
</dbReference>
<dbReference type="Pfam" id="PF01399">
    <property type="entry name" value="PCI"/>
    <property type="match status" value="1"/>
</dbReference>
<dbReference type="Pfam" id="PF10602">
    <property type="entry name" value="RPN7"/>
    <property type="match status" value="1"/>
</dbReference>
<dbReference type="SMART" id="SM00088">
    <property type="entry name" value="PINT"/>
    <property type="match status" value="1"/>
</dbReference>
<dbReference type="SUPFAM" id="SSF46785">
    <property type="entry name" value="Winged helix' DNA-binding domain"/>
    <property type="match status" value="1"/>
</dbReference>
<dbReference type="PROSITE" id="PS50250">
    <property type="entry name" value="PCI"/>
    <property type="match status" value="1"/>
</dbReference>
<organism>
    <name type="scientific">Neurospora crassa (strain ATCC 24698 / 74-OR23-1A / CBS 708.71 / DSM 1257 / FGSC 987)</name>
    <dbReference type="NCBI Taxonomy" id="367110"/>
    <lineage>
        <taxon>Eukaryota</taxon>
        <taxon>Fungi</taxon>
        <taxon>Dikarya</taxon>
        <taxon>Ascomycota</taxon>
        <taxon>Pezizomycotina</taxon>
        <taxon>Sordariomycetes</taxon>
        <taxon>Sordariomycetidae</taxon>
        <taxon>Sordariales</taxon>
        <taxon>Sordariaceae</taxon>
        <taxon>Neurospora</taxon>
    </lineage>
</organism>